<organism>
    <name type="scientific">Korarchaeum cryptofilum (strain OPF8)</name>
    <dbReference type="NCBI Taxonomy" id="374847"/>
    <lineage>
        <taxon>Archaea</taxon>
        <taxon>Thermoproteota</taxon>
        <taxon>Candidatus Korarchaeia</taxon>
        <taxon>Candidatus Korarchaeales</taxon>
        <taxon>Candidatus Korarchaeaceae</taxon>
        <taxon>Candidatus Korarchaeum</taxon>
    </lineage>
</organism>
<accession>B1L765</accession>
<feature type="chain" id="PRO_0000348415" description="Glyoxylate reductase">
    <location>
        <begin position="1"/>
        <end position="332"/>
    </location>
</feature>
<feature type="active site" evidence="1">
    <location>
        <position position="238"/>
    </location>
</feature>
<feature type="active site" evidence="1">
    <location>
        <position position="267"/>
    </location>
</feature>
<feature type="active site" description="Proton donor" evidence="1">
    <location>
        <position position="286"/>
    </location>
</feature>
<feature type="binding site" evidence="1">
    <location>
        <begin position="155"/>
        <end position="158"/>
    </location>
    <ligand>
        <name>NADP(+)</name>
        <dbReference type="ChEBI" id="CHEBI:58349"/>
    </ligand>
</feature>
<feature type="binding site" evidence="1">
    <location>
        <begin position="236"/>
        <end position="238"/>
    </location>
    <ligand>
        <name>NADP(+)</name>
        <dbReference type="ChEBI" id="CHEBI:58349"/>
    </ligand>
</feature>
<feature type="binding site" evidence="1">
    <location>
        <begin position="286"/>
        <end position="288"/>
    </location>
    <ligand>
        <name>NADP(+)</name>
        <dbReference type="ChEBI" id="CHEBI:58349"/>
    </ligand>
</feature>
<dbReference type="EC" id="1.1.1.26" evidence="1"/>
<dbReference type="EMBL" id="CP000968">
    <property type="protein sequence ID" value="ACB08294.1"/>
    <property type="molecule type" value="Genomic_DNA"/>
</dbReference>
<dbReference type="RefSeq" id="WP_012310191.1">
    <property type="nucleotide sequence ID" value="NC_010482.1"/>
</dbReference>
<dbReference type="SMR" id="B1L765"/>
<dbReference type="FunCoup" id="B1L765">
    <property type="interactions" value="154"/>
</dbReference>
<dbReference type="STRING" id="374847.Kcr_1548"/>
<dbReference type="EnsemblBacteria" id="ACB08294">
    <property type="protein sequence ID" value="ACB08294"/>
    <property type="gene ID" value="Kcr_1548"/>
</dbReference>
<dbReference type="GeneID" id="6094825"/>
<dbReference type="KEGG" id="kcr:Kcr_1548"/>
<dbReference type="eggNOG" id="arCOG01755">
    <property type="taxonomic scope" value="Archaea"/>
</dbReference>
<dbReference type="HOGENOM" id="CLU_019796_1_3_2"/>
<dbReference type="InParanoid" id="B1L765"/>
<dbReference type="OrthoDB" id="34275at2157"/>
<dbReference type="PhylomeDB" id="B1L765"/>
<dbReference type="Proteomes" id="UP000001686">
    <property type="component" value="Chromosome"/>
</dbReference>
<dbReference type="GO" id="GO:0005829">
    <property type="term" value="C:cytosol"/>
    <property type="evidence" value="ECO:0000318"/>
    <property type="project" value="GO_Central"/>
</dbReference>
<dbReference type="GO" id="GO:0047964">
    <property type="term" value="F:glyoxylate reductase (NADH) activity"/>
    <property type="evidence" value="ECO:0007669"/>
    <property type="project" value="UniProtKB-UniRule"/>
</dbReference>
<dbReference type="GO" id="GO:0030267">
    <property type="term" value="F:glyoxylate reductase (NADPH) activity"/>
    <property type="evidence" value="ECO:0000318"/>
    <property type="project" value="GO_Central"/>
</dbReference>
<dbReference type="GO" id="GO:0016618">
    <property type="term" value="F:hydroxypyruvate reductase [NAD(P)H] activity"/>
    <property type="evidence" value="ECO:0000318"/>
    <property type="project" value="GO_Central"/>
</dbReference>
<dbReference type="GO" id="GO:0051287">
    <property type="term" value="F:NAD binding"/>
    <property type="evidence" value="ECO:0007669"/>
    <property type="project" value="InterPro"/>
</dbReference>
<dbReference type="CDD" id="cd05301">
    <property type="entry name" value="GDH"/>
    <property type="match status" value="1"/>
</dbReference>
<dbReference type="FunFam" id="3.40.50.720:FF:000462">
    <property type="entry name" value="Glyoxylate reductase (NADP+)"/>
    <property type="match status" value="1"/>
</dbReference>
<dbReference type="Gene3D" id="3.40.50.720">
    <property type="entry name" value="NAD(P)-binding Rossmann-like Domain"/>
    <property type="match status" value="2"/>
</dbReference>
<dbReference type="HAMAP" id="MF_00776">
    <property type="entry name" value="GyaR"/>
    <property type="match status" value="1"/>
</dbReference>
<dbReference type="InterPro" id="IPR050223">
    <property type="entry name" value="D-isomer_2-hydroxyacid_DH"/>
</dbReference>
<dbReference type="InterPro" id="IPR006139">
    <property type="entry name" value="D-isomer_2_OHA_DH_cat_dom"/>
</dbReference>
<dbReference type="InterPro" id="IPR029753">
    <property type="entry name" value="D-isomer_DH_CS"/>
</dbReference>
<dbReference type="InterPro" id="IPR029752">
    <property type="entry name" value="D-isomer_DH_CS1"/>
</dbReference>
<dbReference type="InterPro" id="IPR006140">
    <property type="entry name" value="D-isomer_DH_NAD-bd"/>
</dbReference>
<dbReference type="InterPro" id="IPR023519">
    <property type="entry name" value="Glyoxylate_reductase_GyaR"/>
</dbReference>
<dbReference type="InterPro" id="IPR036291">
    <property type="entry name" value="NAD(P)-bd_dom_sf"/>
</dbReference>
<dbReference type="NCBIfam" id="NF009714">
    <property type="entry name" value="PRK13243.1"/>
    <property type="match status" value="1"/>
</dbReference>
<dbReference type="PANTHER" id="PTHR10996">
    <property type="entry name" value="2-HYDROXYACID DEHYDROGENASE-RELATED"/>
    <property type="match status" value="1"/>
</dbReference>
<dbReference type="PANTHER" id="PTHR10996:SF283">
    <property type="entry name" value="GLYOXYLATE_HYDROXYPYRUVATE REDUCTASE B"/>
    <property type="match status" value="1"/>
</dbReference>
<dbReference type="Pfam" id="PF00389">
    <property type="entry name" value="2-Hacid_dh"/>
    <property type="match status" value="1"/>
</dbReference>
<dbReference type="Pfam" id="PF02826">
    <property type="entry name" value="2-Hacid_dh_C"/>
    <property type="match status" value="1"/>
</dbReference>
<dbReference type="SUPFAM" id="SSF52283">
    <property type="entry name" value="Formate/glycerate dehydrogenase catalytic domain-like"/>
    <property type="match status" value="1"/>
</dbReference>
<dbReference type="SUPFAM" id="SSF51735">
    <property type="entry name" value="NAD(P)-binding Rossmann-fold domains"/>
    <property type="match status" value="1"/>
</dbReference>
<dbReference type="PROSITE" id="PS00065">
    <property type="entry name" value="D_2_HYDROXYACID_DH_1"/>
    <property type="match status" value="1"/>
</dbReference>
<dbReference type="PROSITE" id="PS00670">
    <property type="entry name" value="D_2_HYDROXYACID_DH_2"/>
    <property type="match status" value="1"/>
</dbReference>
<dbReference type="PROSITE" id="PS00671">
    <property type="entry name" value="D_2_HYDROXYACID_DH_3"/>
    <property type="match status" value="1"/>
</dbReference>
<protein>
    <recommendedName>
        <fullName evidence="1">Glyoxylate reductase</fullName>
        <ecNumber evidence="1">1.1.1.26</ecNumber>
    </recommendedName>
</protein>
<sequence length="332" mass="37477">MKPRVFVTREIPERGLSKIEEHFELDLWKDEAPPSKKVIIERVKDCDALVSLLTDPIDAEVFEAAPKLRIVAQYAVGYDNIDVKEATKRGIYVTNTPGVLTETTADFAFALLMAAARRVVEADRYVREGKWKVAWHPMMMLGYDVYGRTLGIVGMGRIGAAVARRAKGFGMRILYYDSIRREDFEKELGVEYVPLEKLLEESDFVSLHVPLTEETYHMIGEEQLRRMKRTAILVNTSRGKVVDQKALYKALKEGWIAGAGLDVFEQEPIPPDDPLLKLENVVLAPHAASASHETRSRMAEMVAENLIAFKRGEIPPNLVNQEVVKVRPPGFQ</sequence>
<evidence type="ECO:0000255" key="1">
    <source>
        <dbReference type="HAMAP-Rule" id="MF_00776"/>
    </source>
</evidence>
<name>GYAR_KORCO</name>
<comment type="catalytic activity">
    <reaction evidence="1">
        <text>glycolate + NAD(+) = glyoxylate + NADH + H(+)</text>
        <dbReference type="Rhea" id="RHEA:18229"/>
        <dbReference type="ChEBI" id="CHEBI:15378"/>
        <dbReference type="ChEBI" id="CHEBI:29805"/>
        <dbReference type="ChEBI" id="CHEBI:36655"/>
        <dbReference type="ChEBI" id="CHEBI:57540"/>
        <dbReference type="ChEBI" id="CHEBI:57945"/>
        <dbReference type="EC" id="1.1.1.26"/>
    </reaction>
</comment>
<comment type="subunit">
    <text evidence="1">Homodimer.</text>
</comment>
<comment type="subcellular location">
    <subcellularLocation>
        <location evidence="1">Cytoplasm</location>
    </subcellularLocation>
</comment>
<comment type="similarity">
    <text evidence="1">Belongs to the D-isomer specific 2-hydroxyacid dehydrogenase family. GyaR subfamily.</text>
</comment>
<proteinExistence type="inferred from homology"/>
<reference key="1">
    <citation type="journal article" date="2008" name="Proc. Natl. Acad. Sci. U.S.A.">
        <title>A korarchaeal genome reveals new insights into the evolution of the Archaea.</title>
        <authorList>
            <person name="Elkins J.G."/>
            <person name="Podar M."/>
            <person name="Graham D.E."/>
            <person name="Makarova K.S."/>
            <person name="Wolf Y."/>
            <person name="Randau L."/>
            <person name="Hedlund B.P."/>
            <person name="Brochier-Armanet C."/>
            <person name="Kunin V."/>
            <person name="Anderson I."/>
            <person name="Lapidus A."/>
            <person name="Goltsman E."/>
            <person name="Barry K."/>
            <person name="Koonin E.V."/>
            <person name="Hugenholtz P."/>
            <person name="Kyrpides N."/>
            <person name="Wanner G."/>
            <person name="Richardson P."/>
            <person name="Keller M."/>
            <person name="Stetter K.O."/>
        </authorList>
    </citation>
    <scope>NUCLEOTIDE SEQUENCE [LARGE SCALE GENOMIC DNA]</scope>
    <source>
        <strain>OPF8</strain>
    </source>
</reference>
<gene>
    <name evidence="1" type="primary">gyaR</name>
    <name type="ordered locus">Kcr_1548</name>
</gene>
<keyword id="KW-0963">Cytoplasm</keyword>
<keyword id="KW-0520">NAD</keyword>
<keyword id="KW-0560">Oxidoreductase</keyword>
<keyword id="KW-1185">Reference proteome</keyword>